<proteinExistence type="inferred from homology"/>
<evidence type="ECO:0000255" key="1">
    <source>
        <dbReference type="HAMAP-Rule" id="MF_00306"/>
    </source>
</evidence>
<evidence type="ECO:0000305" key="2"/>
<reference key="1">
    <citation type="journal article" date="2005" name="PLoS Biol.">
        <title>The genome sequence of Rickettsia felis identifies the first putative conjugative plasmid in an obligate intracellular parasite.</title>
        <authorList>
            <person name="Ogata H."/>
            <person name="Renesto P."/>
            <person name="Audic S."/>
            <person name="Robert C."/>
            <person name="Blanc G."/>
            <person name="Fournier P.-E."/>
            <person name="Parinello H."/>
            <person name="Claverie J.-M."/>
            <person name="Raoult D."/>
        </authorList>
    </citation>
    <scope>NUCLEOTIDE SEQUENCE [LARGE SCALE GENOMIC DNA]</scope>
    <source>
        <strain>ATCC VR-1525 / URRWXCal2</strain>
    </source>
</reference>
<keyword id="KW-0963">Cytoplasm</keyword>
<keyword id="KW-0342">GTP-binding</keyword>
<keyword id="KW-0378">Hydrolase</keyword>
<keyword id="KW-0547">Nucleotide-binding</keyword>
<keyword id="KW-0687">Ribonucleoprotein</keyword>
<keyword id="KW-0694">RNA-binding</keyword>
<keyword id="KW-0733">Signal recognition particle</keyword>
<accession>Q4UKH4</accession>
<feature type="chain" id="PRO_0000286499" description="Signal recognition particle protein">
    <location>
        <begin position="1"/>
        <end position="449"/>
    </location>
</feature>
<feature type="binding site" evidence="1">
    <location>
        <begin position="109"/>
        <end position="116"/>
    </location>
    <ligand>
        <name>GTP</name>
        <dbReference type="ChEBI" id="CHEBI:37565"/>
    </ligand>
</feature>
<feature type="binding site" evidence="1">
    <location>
        <begin position="191"/>
        <end position="195"/>
    </location>
    <ligand>
        <name>GTP</name>
        <dbReference type="ChEBI" id="CHEBI:37565"/>
    </ligand>
</feature>
<feature type="binding site" evidence="1">
    <location>
        <begin position="249"/>
        <end position="252"/>
    </location>
    <ligand>
        <name>GTP</name>
        <dbReference type="ChEBI" id="CHEBI:37565"/>
    </ligand>
</feature>
<name>SRP54_RICFE</name>
<sequence>MFKTLTQNLTKIFDKLVSSGILTEAQIDAAMRDIRVALLESDVALPVIKDFIAEVKQKALGQEVIKSVSPGQMIIKIIHEEMINLLASSESETKLNLNSKPPVNFLMVGLQGSGKTTASSKLALRLKNQNKKVLLVSLDTYRPAAQEQLAILANSVQINSLPIVQGEKPLDIVKRAIAEAKISAYGVVIYDTAGRTQIDKEMMEEALAIKKIVEPTETLLVIDSMTGQDAVVTANSFNEKLEISGLILSRIDGDSKGGAALSVKYITKKPIKFLSSGEKLTDLEEFDAERLASRILDMGDIISFVEKAASIVDREEAEKTAAKLKKGKFDLNDYLQQMRSIKKMGGFGSILSMLPGSGKIMDQIDQSKLNSKIIEHQEAIILSMTLKERENPDIINASRRKRIAAGAGTTVQKVNILLKQYKQISEMMKKASKMNPKNLLRNGIGKLFS</sequence>
<dbReference type="EC" id="3.6.5.4" evidence="1"/>
<dbReference type="EMBL" id="CP000053">
    <property type="protein sequence ID" value="AAY61957.1"/>
    <property type="status" value="ALT_INIT"/>
    <property type="molecule type" value="Genomic_DNA"/>
</dbReference>
<dbReference type="SMR" id="Q4UKH4"/>
<dbReference type="STRING" id="315456.RF_1106"/>
<dbReference type="KEGG" id="rfe:RF_1106"/>
<dbReference type="eggNOG" id="COG0541">
    <property type="taxonomic scope" value="Bacteria"/>
</dbReference>
<dbReference type="HOGENOM" id="CLU_009301_6_0_5"/>
<dbReference type="OrthoDB" id="9804720at2"/>
<dbReference type="Proteomes" id="UP000008548">
    <property type="component" value="Chromosome"/>
</dbReference>
<dbReference type="GO" id="GO:0048500">
    <property type="term" value="C:signal recognition particle"/>
    <property type="evidence" value="ECO:0007669"/>
    <property type="project" value="UniProtKB-UniRule"/>
</dbReference>
<dbReference type="GO" id="GO:0008312">
    <property type="term" value="F:7S RNA binding"/>
    <property type="evidence" value="ECO:0007669"/>
    <property type="project" value="InterPro"/>
</dbReference>
<dbReference type="GO" id="GO:0016887">
    <property type="term" value="F:ATP hydrolysis activity"/>
    <property type="evidence" value="ECO:0007669"/>
    <property type="project" value="InterPro"/>
</dbReference>
<dbReference type="GO" id="GO:0005525">
    <property type="term" value="F:GTP binding"/>
    <property type="evidence" value="ECO:0007669"/>
    <property type="project" value="UniProtKB-UniRule"/>
</dbReference>
<dbReference type="GO" id="GO:0003924">
    <property type="term" value="F:GTPase activity"/>
    <property type="evidence" value="ECO:0007669"/>
    <property type="project" value="UniProtKB-UniRule"/>
</dbReference>
<dbReference type="GO" id="GO:0006614">
    <property type="term" value="P:SRP-dependent cotranslational protein targeting to membrane"/>
    <property type="evidence" value="ECO:0007669"/>
    <property type="project" value="InterPro"/>
</dbReference>
<dbReference type="CDD" id="cd18539">
    <property type="entry name" value="SRP_G"/>
    <property type="match status" value="1"/>
</dbReference>
<dbReference type="Gene3D" id="3.40.50.300">
    <property type="entry name" value="P-loop containing nucleotide triphosphate hydrolases"/>
    <property type="match status" value="1"/>
</dbReference>
<dbReference type="Gene3D" id="1.20.120.140">
    <property type="entry name" value="Signal recognition particle SRP54, nucleotide-binding domain"/>
    <property type="match status" value="1"/>
</dbReference>
<dbReference type="Gene3D" id="1.10.260.30">
    <property type="entry name" value="Signal recognition particle, SRP54 subunit, M-domain"/>
    <property type="match status" value="1"/>
</dbReference>
<dbReference type="HAMAP" id="MF_00306">
    <property type="entry name" value="SRP54"/>
    <property type="match status" value="1"/>
</dbReference>
<dbReference type="InterPro" id="IPR003593">
    <property type="entry name" value="AAA+_ATPase"/>
</dbReference>
<dbReference type="InterPro" id="IPR027417">
    <property type="entry name" value="P-loop_NTPase"/>
</dbReference>
<dbReference type="InterPro" id="IPR036891">
    <property type="entry name" value="Signal_recog_part_SRP54_M_sf"/>
</dbReference>
<dbReference type="InterPro" id="IPR013822">
    <property type="entry name" value="Signal_recog_particl_SRP54_hlx"/>
</dbReference>
<dbReference type="InterPro" id="IPR004125">
    <property type="entry name" value="Signal_recog_particle_SRP54_M"/>
</dbReference>
<dbReference type="InterPro" id="IPR004780">
    <property type="entry name" value="SRP"/>
</dbReference>
<dbReference type="InterPro" id="IPR022941">
    <property type="entry name" value="SRP54"/>
</dbReference>
<dbReference type="InterPro" id="IPR000897">
    <property type="entry name" value="SRP54_GTPase_dom"/>
</dbReference>
<dbReference type="InterPro" id="IPR042101">
    <property type="entry name" value="SRP54_N_sf"/>
</dbReference>
<dbReference type="NCBIfam" id="TIGR00959">
    <property type="entry name" value="ffh"/>
    <property type="match status" value="1"/>
</dbReference>
<dbReference type="PANTHER" id="PTHR11564">
    <property type="entry name" value="SIGNAL RECOGNITION PARTICLE 54K PROTEIN SRP54"/>
    <property type="match status" value="1"/>
</dbReference>
<dbReference type="PANTHER" id="PTHR11564:SF5">
    <property type="entry name" value="SIGNAL RECOGNITION PARTICLE SUBUNIT SRP54"/>
    <property type="match status" value="1"/>
</dbReference>
<dbReference type="Pfam" id="PF00448">
    <property type="entry name" value="SRP54"/>
    <property type="match status" value="1"/>
</dbReference>
<dbReference type="Pfam" id="PF02881">
    <property type="entry name" value="SRP54_N"/>
    <property type="match status" value="1"/>
</dbReference>
<dbReference type="Pfam" id="PF02978">
    <property type="entry name" value="SRP_SPB"/>
    <property type="match status" value="1"/>
</dbReference>
<dbReference type="SMART" id="SM00382">
    <property type="entry name" value="AAA"/>
    <property type="match status" value="1"/>
</dbReference>
<dbReference type="SMART" id="SM00962">
    <property type="entry name" value="SRP54"/>
    <property type="match status" value="1"/>
</dbReference>
<dbReference type="SMART" id="SM00963">
    <property type="entry name" value="SRP54_N"/>
    <property type="match status" value="1"/>
</dbReference>
<dbReference type="SUPFAM" id="SSF52540">
    <property type="entry name" value="P-loop containing nucleoside triphosphate hydrolases"/>
    <property type="match status" value="1"/>
</dbReference>
<dbReference type="SUPFAM" id="SSF47446">
    <property type="entry name" value="Signal peptide-binding domain"/>
    <property type="match status" value="1"/>
</dbReference>
<dbReference type="PROSITE" id="PS00300">
    <property type="entry name" value="SRP54"/>
    <property type="match status" value="1"/>
</dbReference>
<protein>
    <recommendedName>
        <fullName evidence="1">Signal recognition particle protein</fullName>
        <ecNumber evidence="1">3.6.5.4</ecNumber>
    </recommendedName>
    <alternativeName>
        <fullName evidence="1">Fifty-four homolog</fullName>
    </alternativeName>
</protein>
<comment type="function">
    <text evidence="1">Involved in targeting and insertion of nascent membrane proteins into the cytoplasmic membrane. Binds to the hydrophobic signal sequence of the ribosome-nascent chain (RNC) as it emerges from the ribosomes. The SRP-RNC complex is then targeted to the cytoplasmic membrane where it interacts with the SRP receptor FtsY. Interaction with FtsY leads to the transfer of the RNC complex to the Sec translocase for insertion into the membrane, the hydrolysis of GTP by both Ffh and FtsY, and the dissociation of the SRP-FtsY complex into the individual components.</text>
</comment>
<comment type="catalytic activity">
    <reaction evidence="1">
        <text>GTP + H2O = GDP + phosphate + H(+)</text>
        <dbReference type="Rhea" id="RHEA:19669"/>
        <dbReference type="ChEBI" id="CHEBI:15377"/>
        <dbReference type="ChEBI" id="CHEBI:15378"/>
        <dbReference type="ChEBI" id="CHEBI:37565"/>
        <dbReference type="ChEBI" id="CHEBI:43474"/>
        <dbReference type="ChEBI" id="CHEBI:58189"/>
        <dbReference type="EC" id="3.6.5.4"/>
    </reaction>
</comment>
<comment type="subunit">
    <text evidence="1">Part of the signal recognition particle protein translocation system, which is composed of SRP and FtsY. SRP is a ribonucleoprotein composed of Ffh and a 4.5S RNA molecule.</text>
</comment>
<comment type="subcellular location">
    <subcellularLocation>
        <location evidence="1">Cytoplasm</location>
    </subcellularLocation>
    <text evidence="1">The SRP-RNC complex is targeted to the cytoplasmic membrane.</text>
</comment>
<comment type="domain">
    <text evidence="1">Composed of three domains: the N-terminal N domain, which is responsible for interactions with the ribosome, the central G domain, which binds GTP, and the C-terminal M domain, which binds the RNA and the signal sequence of the RNC.</text>
</comment>
<comment type="similarity">
    <text evidence="1">Belongs to the GTP-binding SRP family. SRP54 subfamily.</text>
</comment>
<comment type="sequence caution" evidence="2">
    <conflict type="erroneous initiation">
        <sequence resource="EMBL-CDS" id="AAY61957"/>
    </conflict>
</comment>
<gene>
    <name evidence="1" type="primary">ffh</name>
    <name type="ordered locus">RF_1106</name>
</gene>
<organism>
    <name type="scientific">Rickettsia felis (strain ATCC VR-1525 / URRWXCal2)</name>
    <name type="common">Rickettsia azadi</name>
    <dbReference type="NCBI Taxonomy" id="315456"/>
    <lineage>
        <taxon>Bacteria</taxon>
        <taxon>Pseudomonadati</taxon>
        <taxon>Pseudomonadota</taxon>
        <taxon>Alphaproteobacteria</taxon>
        <taxon>Rickettsiales</taxon>
        <taxon>Rickettsiaceae</taxon>
        <taxon>Rickettsieae</taxon>
        <taxon>Rickettsia</taxon>
        <taxon>spotted fever group</taxon>
    </lineage>
</organism>